<accession>P32689</accession>
<accession>Q2M6S5</accession>
<feature type="signal peptide" evidence="1">
    <location>
        <begin position="1"/>
        <end position="17"/>
    </location>
</feature>
<feature type="chain" id="PRO_0000018056" description="Uncharacterized lipoprotein YjbH">
    <location>
        <begin position="18"/>
        <end position="698"/>
    </location>
</feature>
<feature type="lipid moiety-binding region" description="N-palmitoyl cysteine" evidence="1">
    <location>
        <position position="18"/>
    </location>
</feature>
<feature type="lipid moiety-binding region" description="S-diacylglycerol cysteine" evidence="1">
    <location>
        <position position="18"/>
    </location>
</feature>
<comment type="subcellular location">
    <subcellularLocation>
        <location evidence="2">Cell membrane</location>
        <topology evidence="2">Lipid-anchor</topology>
    </subcellularLocation>
</comment>
<comment type="similarity">
    <text evidence="2">To E.coli YmcA.</text>
</comment>
<keyword id="KW-1003">Cell membrane</keyword>
<keyword id="KW-0449">Lipoprotein</keyword>
<keyword id="KW-0472">Membrane</keyword>
<keyword id="KW-0564">Palmitate</keyword>
<keyword id="KW-1185">Reference proteome</keyword>
<keyword id="KW-0732">Signal</keyword>
<evidence type="ECO:0000255" key="1">
    <source>
        <dbReference type="PROSITE-ProRule" id="PRU00303"/>
    </source>
</evidence>
<evidence type="ECO:0000305" key="2"/>
<protein>
    <recommendedName>
        <fullName>Uncharacterized lipoprotein YjbH</fullName>
    </recommendedName>
</protein>
<sequence length="698" mass="78491">MKKRHLLSLLALGISTACYGETYPAPIGPSQSDFGGVGLLQTPTARMAREGELSLNYRDNDQYRYYSASVQLFPWLETTLRYTDVRTRQYSSVEAFSGDQTYKDKAFDLKLRLWEESYWLPQVAVGARDIGGTGLFDAEYLVASKAWGPFDFTLGLGWGYLGTSGNVKNPLCSASDKYCYRDNSYKQAGSIDGSQMFHGPASLFGGVEYQTPWQPLRLKLEYEGNNYQQDFAGKLEQKSKFNVGAIYRVTDWADVNLSYERGNTFMFGVTLRTNFNDLRPSYNDNARPQYQPQPQDAILQHSVVANQLTLLKYNAGLADPQIQAKGDTLYVTGEQVKYRDSREGIIRANRIVMNDLPDGIKTIRITENRLNMPQVTTETDVASLKNHLAGEPLGHETTLAQKRVEPVVPQSTEQGWYIDKSRFDFHIDPVLNQSVGGPENFYMYQLGVMGTADLWLTDHLLTTGSLFANLANNYDKFNYTNPPQDSHLPRVRTHVREYVQNDVYVNNLQANYFQHLGNGFYGQVYGGYLETMFGGAGAEVLYRPLDSNWAFGLDANYVKQRDWRSAKDMMKFTDYSVKTGHLTAYWTPSFAQDVLVKASVGQYLAGDKGGTLEIAKRFDSGVVVGGYATITNVSKEEYGEGDFTKGVYVSVPLDLFSSGPTRSRAAIGWTPLTRDGGQQLGRKFQLYDMTSDRSVNFR</sequence>
<organism>
    <name type="scientific">Escherichia coli (strain K12)</name>
    <dbReference type="NCBI Taxonomy" id="83333"/>
    <lineage>
        <taxon>Bacteria</taxon>
        <taxon>Pseudomonadati</taxon>
        <taxon>Pseudomonadota</taxon>
        <taxon>Gammaproteobacteria</taxon>
        <taxon>Enterobacterales</taxon>
        <taxon>Enterobacteriaceae</taxon>
        <taxon>Escherichia</taxon>
    </lineage>
</organism>
<name>YJBH_ECOLI</name>
<dbReference type="EMBL" id="U00006">
    <property type="protein sequence ID" value="AAC43123.1"/>
    <property type="molecule type" value="Genomic_DNA"/>
</dbReference>
<dbReference type="EMBL" id="U00096">
    <property type="protein sequence ID" value="AAC76999.1"/>
    <property type="molecule type" value="Genomic_DNA"/>
</dbReference>
<dbReference type="EMBL" id="AP009048">
    <property type="protein sequence ID" value="BAE78031.1"/>
    <property type="molecule type" value="Genomic_DNA"/>
</dbReference>
<dbReference type="PIR" id="D65210">
    <property type="entry name" value="D65210"/>
</dbReference>
<dbReference type="RefSeq" id="NP_418453.1">
    <property type="nucleotide sequence ID" value="NC_000913.3"/>
</dbReference>
<dbReference type="RefSeq" id="WP_000745776.1">
    <property type="nucleotide sequence ID" value="NZ_SSZK01000049.1"/>
</dbReference>
<dbReference type="BioGRID" id="4262659">
    <property type="interactions" value="4"/>
</dbReference>
<dbReference type="DIP" id="DIP-12537N"/>
<dbReference type="FunCoup" id="P32689">
    <property type="interactions" value="219"/>
</dbReference>
<dbReference type="IntAct" id="P32689">
    <property type="interactions" value="3"/>
</dbReference>
<dbReference type="STRING" id="511145.b4029"/>
<dbReference type="PaxDb" id="511145-b4029"/>
<dbReference type="EnsemblBacteria" id="AAC76999">
    <property type="protein sequence ID" value="AAC76999"/>
    <property type="gene ID" value="b4029"/>
</dbReference>
<dbReference type="GeneID" id="948527"/>
<dbReference type="KEGG" id="ecj:JW3989"/>
<dbReference type="KEGG" id="eco:b4029"/>
<dbReference type="KEGG" id="ecoc:C3026_21760"/>
<dbReference type="PATRIC" id="fig|1411691.4.peg.2684"/>
<dbReference type="EchoBASE" id="EB1870"/>
<dbReference type="eggNOG" id="COG4775">
    <property type="taxonomic scope" value="Bacteria"/>
</dbReference>
<dbReference type="HOGENOM" id="CLU_007558_1_0_6"/>
<dbReference type="InParanoid" id="P32689"/>
<dbReference type="OMA" id="QTPWEPL"/>
<dbReference type="OrthoDB" id="19542at2"/>
<dbReference type="PhylomeDB" id="P32689"/>
<dbReference type="BioCyc" id="EcoCyc:EG11926-MONOMER"/>
<dbReference type="PRO" id="PR:P32689"/>
<dbReference type="Proteomes" id="UP000000625">
    <property type="component" value="Chromosome"/>
</dbReference>
<dbReference type="GO" id="GO:0005886">
    <property type="term" value="C:plasma membrane"/>
    <property type="evidence" value="ECO:0007669"/>
    <property type="project" value="UniProtKB-SubCell"/>
</dbReference>
<dbReference type="InterPro" id="IPR010344">
    <property type="entry name" value="YbjH"/>
</dbReference>
<dbReference type="Pfam" id="PF06082">
    <property type="entry name" value="YjbH"/>
    <property type="match status" value="1"/>
</dbReference>
<dbReference type="PROSITE" id="PS51257">
    <property type="entry name" value="PROKAR_LIPOPROTEIN"/>
    <property type="match status" value="1"/>
</dbReference>
<proteinExistence type="inferred from homology"/>
<reference key="1">
    <citation type="journal article" date="1993" name="Nucleic Acids Res.">
        <title>Analysis of the Escherichia coli genome. IV. DNA sequence of the region from 89.2 to 92.8 minutes.</title>
        <authorList>
            <person name="Blattner F.R."/>
            <person name="Burland V.D."/>
            <person name="Plunkett G. III"/>
            <person name="Sofia H.J."/>
            <person name="Daniels D.L."/>
        </authorList>
    </citation>
    <scope>NUCLEOTIDE SEQUENCE [LARGE SCALE GENOMIC DNA]</scope>
    <source>
        <strain>K12 / MG1655 / ATCC 47076</strain>
    </source>
</reference>
<reference key="2">
    <citation type="journal article" date="1997" name="Science">
        <title>The complete genome sequence of Escherichia coli K-12.</title>
        <authorList>
            <person name="Blattner F.R."/>
            <person name="Plunkett G. III"/>
            <person name="Bloch C.A."/>
            <person name="Perna N.T."/>
            <person name="Burland V."/>
            <person name="Riley M."/>
            <person name="Collado-Vides J."/>
            <person name="Glasner J.D."/>
            <person name="Rode C.K."/>
            <person name="Mayhew G.F."/>
            <person name="Gregor J."/>
            <person name="Davis N.W."/>
            <person name="Kirkpatrick H.A."/>
            <person name="Goeden M.A."/>
            <person name="Rose D.J."/>
            <person name="Mau B."/>
            <person name="Shao Y."/>
        </authorList>
    </citation>
    <scope>NUCLEOTIDE SEQUENCE [LARGE SCALE GENOMIC DNA]</scope>
    <source>
        <strain>K12 / MG1655 / ATCC 47076</strain>
    </source>
</reference>
<reference key="3">
    <citation type="journal article" date="2006" name="Mol. Syst. Biol.">
        <title>Highly accurate genome sequences of Escherichia coli K-12 strains MG1655 and W3110.</title>
        <authorList>
            <person name="Hayashi K."/>
            <person name="Morooka N."/>
            <person name="Yamamoto Y."/>
            <person name="Fujita K."/>
            <person name="Isono K."/>
            <person name="Choi S."/>
            <person name="Ohtsubo E."/>
            <person name="Baba T."/>
            <person name="Wanner B.L."/>
            <person name="Mori H."/>
            <person name="Horiuchi T."/>
        </authorList>
    </citation>
    <scope>NUCLEOTIDE SEQUENCE [LARGE SCALE GENOMIC DNA]</scope>
    <source>
        <strain>K12 / W3110 / ATCC 27325 / DSM 5911</strain>
    </source>
</reference>
<gene>
    <name type="primary">yjbH</name>
    <name type="ordered locus">b4029</name>
    <name type="ordered locus">JW3989</name>
</gene>